<sequence length="203" mass="22853">MMTAIAIHPEVLRDVVAAALGDKARSVTVALGEVTVEVSAAQYLEAMQVLHTAPDCRFEVLVDLCGVDYSTYAEVGREGPRFAVVSHLLSISLNQRLRVRVFCTDDDFPVVASVTSVWAGANWFEREAFDLFGIVFDGHDDLRRILTDYGFIGHPFRKDFPLSGHVEMRYDPEQQRVVYQPVTIEPREITPRIIREDNYGGLH</sequence>
<accession>A9BNB2</accession>
<keyword id="KW-0997">Cell inner membrane</keyword>
<keyword id="KW-1003">Cell membrane</keyword>
<keyword id="KW-0472">Membrane</keyword>
<keyword id="KW-0520">NAD</keyword>
<keyword id="KW-0874">Quinone</keyword>
<keyword id="KW-1185">Reference proteome</keyword>
<keyword id="KW-1278">Translocase</keyword>
<keyword id="KW-0813">Transport</keyword>
<keyword id="KW-0830">Ubiquinone</keyword>
<proteinExistence type="inferred from homology"/>
<comment type="function">
    <text evidence="1">NDH-1 shuttles electrons from NADH, via FMN and iron-sulfur (Fe-S) centers, to quinones in the respiratory chain. The immediate electron acceptor for the enzyme in this species is believed to be ubiquinone. Couples the redox reaction to proton translocation (for every two electrons transferred, four hydrogen ions are translocated across the cytoplasmic membrane), and thus conserves the redox energy in a proton gradient.</text>
</comment>
<comment type="catalytic activity">
    <reaction evidence="1">
        <text>a quinone + NADH + 5 H(+)(in) = a quinol + NAD(+) + 4 H(+)(out)</text>
        <dbReference type="Rhea" id="RHEA:57888"/>
        <dbReference type="ChEBI" id="CHEBI:15378"/>
        <dbReference type="ChEBI" id="CHEBI:24646"/>
        <dbReference type="ChEBI" id="CHEBI:57540"/>
        <dbReference type="ChEBI" id="CHEBI:57945"/>
        <dbReference type="ChEBI" id="CHEBI:132124"/>
    </reaction>
</comment>
<comment type="subunit">
    <text evidence="1">NDH-1 is composed of 14 different subunits. Subunits NuoB, C, D, E, F, and G constitute the peripheral sector of the complex.</text>
</comment>
<comment type="subcellular location">
    <subcellularLocation>
        <location evidence="1">Cell inner membrane</location>
        <topology evidence="1">Peripheral membrane protein</topology>
        <orientation evidence="1">Cytoplasmic side</orientation>
    </subcellularLocation>
</comment>
<comment type="similarity">
    <text evidence="1">Belongs to the complex I 30 kDa subunit family.</text>
</comment>
<dbReference type="EC" id="7.1.1.-" evidence="1"/>
<dbReference type="EMBL" id="CP000884">
    <property type="protein sequence ID" value="ABX37807.1"/>
    <property type="molecule type" value="Genomic_DNA"/>
</dbReference>
<dbReference type="SMR" id="A9BNB2"/>
<dbReference type="STRING" id="398578.Daci_5178"/>
<dbReference type="KEGG" id="dac:Daci_5178"/>
<dbReference type="eggNOG" id="COG0852">
    <property type="taxonomic scope" value="Bacteria"/>
</dbReference>
<dbReference type="HOGENOM" id="CLU_042628_2_1_4"/>
<dbReference type="Proteomes" id="UP000000784">
    <property type="component" value="Chromosome"/>
</dbReference>
<dbReference type="GO" id="GO:0005886">
    <property type="term" value="C:plasma membrane"/>
    <property type="evidence" value="ECO:0007669"/>
    <property type="project" value="UniProtKB-SubCell"/>
</dbReference>
<dbReference type="GO" id="GO:0008137">
    <property type="term" value="F:NADH dehydrogenase (ubiquinone) activity"/>
    <property type="evidence" value="ECO:0007669"/>
    <property type="project" value="InterPro"/>
</dbReference>
<dbReference type="GO" id="GO:0050136">
    <property type="term" value="F:NADH:ubiquinone reductase (non-electrogenic) activity"/>
    <property type="evidence" value="ECO:0007669"/>
    <property type="project" value="UniProtKB-UniRule"/>
</dbReference>
<dbReference type="GO" id="GO:0048038">
    <property type="term" value="F:quinone binding"/>
    <property type="evidence" value="ECO:0007669"/>
    <property type="project" value="UniProtKB-KW"/>
</dbReference>
<dbReference type="Gene3D" id="3.30.460.80">
    <property type="entry name" value="NADH:ubiquinone oxidoreductase, 30kDa subunit"/>
    <property type="match status" value="1"/>
</dbReference>
<dbReference type="HAMAP" id="MF_01357">
    <property type="entry name" value="NDH1_NuoC"/>
    <property type="match status" value="1"/>
</dbReference>
<dbReference type="InterPro" id="IPR010218">
    <property type="entry name" value="NADH_DH_suC"/>
</dbReference>
<dbReference type="InterPro" id="IPR037232">
    <property type="entry name" value="NADH_quin_OxRdtase_su_C/D-like"/>
</dbReference>
<dbReference type="InterPro" id="IPR001268">
    <property type="entry name" value="NADH_UbQ_OxRdtase_30kDa_su"/>
</dbReference>
<dbReference type="InterPro" id="IPR020396">
    <property type="entry name" value="NADH_UbQ_OxRdtase_CS"/>
</dbReference>
<dbReference type="NCBIfam" id="TIGR01961">
    <property type="entry name" value="NuoC_fam"/>
    <property type="match status" value="1"/>
</dbReference>
<dbReference type="NCBIfam" id="NF004730">
    <property type="entry name" value="PRK06074.1-1"/>
    <property type="match status" value="1"/>
</dbReference>
<dbReference type="PANTHER" id="PTHR10884:SF14">
    <property type="entry name" value="NADH DEHYDROGENASE [UBIQUINONE] IRON-SULFUR PROTEIN 3, MITOCHONDRIAL"/>
    <property type="match status" value="1"/>
</dbReference>
<dbReference type="PANTHER" id="PTHR10884">
    <property type="entry name" value="NADH DEHYDROGENASE UBIQUINONE IRON-SULFUR PROTEIN 3"/>
    <property type="match status" value="1"/>
</dbReference>
<dbReference type="Pfam" id="PF00329">
    <property type="entry name" value="Complex1_30kDa"/>
    <property type="match status" value="1"/>
</dbReference>
<dbReference type="SUPFAM" id="SSF143243">
    <property type="entry name" value="Nqo5-like"/>
    <property type="match status" value="1"/>
</dbReference>
<dbReference type="PROSITE" id="PS00542">
    <property type="entry name" value="COMPLEX1_30K"/>
    <property type="match status" value="1"/>
</dbReference>
<evidence type="ECO:0000255" key="1">
    <source>
        <dbReference type="HAMAP-Rule" id="MF_01357"/>
    </source>
</evidence>
<protein>
    <recommendedName>
        <fullName evidence="1">NADH-quinone oxidoreductase subunit C</fullName>
        <ecNumber evidence="1">7.1.1.-</ecNumber>
    </recommendedName>
    <alternativeName>
        <fullName evidence="1">NADH dehydrogenase I subunit C</fullName>
    </alternativeName>
    <alternativeName>
        <fullName evidence="1">NDH-1 subunit C</fullName>
    </alternativeName>
</protein>
<name>NUOC_DELAS</name>
<gene>
    <name evidence="1" type="primary">nuoC</name>
    <name type="ordered locus">Daci_5178</name>
</gene>
<reference key="1">
    <citation type="submission" date="2007-11" db="EMBL/GenBank/DDBJ databases">
        <title>Complete sequence of Delftia acidovorans DSM 14801 / SPH-1.</title>
        <authorList>
            <person name="Copeland A."/>
            <person name="Lucas S."/>
            <person name="Lapidus A."/>
            <person name="Barry K."/>
            <person name="Glavina del Rio T."/>
            <person name="Dalin E."/>
            <person name="Tice H."/>
            <person name="Pitluck S."/>
            <person name="Lowry S."/>
            <person name="Clum A."/>
            <person name="Schmutz J."/>
            <person name="Larimer F."/>
            <person name="Land M."/>
            <person name="Hauser L."/>
            <person name="Kyrpides N."/>
            <person name="Kim E."/>
            <person name="Schleheck D."/>
            <person name="Richardson P."/>
        </authorList>
    </citation>
    <scope>NUCLEOTIDE SEQUENCE [LARGE SCALE GENOMIC DNA]</scope>
    <source>
        <strain>DSM 14801 / SPH-1</strain>
    </source>
</reference>
<feature type="chain" id="PRO_0000358092" description="NADH-quinone oxidoreductase subunit C">
    <location>
        <begin position="1"/>
        <end position="203"/>
    </location>
</feature>
<organism>
    <name type="scientific">Delftia acidovorans (strain DSM 14801 / SPH-1)</name>
    <dbReference type="NCBI Taxonomy" id="398578"/>
    <lineage>
        <taxon>Bacteria</taxon>
        <taxon>Pseudomonadati</taxon>
        <taxon>Pseudomonadota</taxon>
        <taxon>Betaproteobacteria</taxon>
        <taxon>Burkholderiales</taxon>
        <taxon>Comamonadaceae</taxon>
        <taxon>Delftia</taxon>
    </lineage>
</organism>